<proteinExistence type="evidence at protein level"/>
<protein>
    <recommendedName>
        <fullName>Melanoma-associated antigen 12</fullName>
    </recommendedName>
    <alternativeName>
        <fullName>Cancer/testis antigen 1.12</fullName>
        <shortName>CT1.12</shortName>
    </alternativeName>
    <alternativeName>
        <fullName>MAGE-12 antigen</fullName>
    </alternativeName>
    <alternativeName>
        <fullName>MAGE12F antigen</fullName>
    </alternativeName>
</protein>
<comment type="function">
    <text evidence="3">Not known, though may play a role tumor transformation or progression. In vitro promotes cell viability in melanoma cell lines.</text>
</comment>
<comment type="interaction">
    <interactant intactId="EBI-749530">
        <id>P43365</id>
    </interactant>
    <interactant intactId="EBI-742038">
        <id>Q9P2A4</id>
        <label>ABI3</label>
    </interactant>
    <organismsDiffer>false</organismsDiffer>
    <experiments>3</experiments>
</comment>
<comment type="interaction">
    <interactant intactId="EBI-749530">
        <id>P43365</id>
    </interactant>
    <interactant intactId="EBI-6598617">
        <id>Q6PH81</id>
        <label>C16orf87</label>
    </interactant>
    <organismsDiffer>false</organismsDiffer>
    <experiments>6</experiments>
</comment>
<comment type="interaction">
    <interactant intactId="EBI-749530">
        <id>P43365</id>
    </interactant>
    <interactant intactId="EBI-5655540">
        <id>Q8N3C7</id>
        <label>CLIP4</label>
    </interactant>
    <organismsDiffer>false</organismsDiffer>
    <experiments>6</experiments>
</comment>
<comment type="interaction">
    <interactant intactId="EBI-749530">
        <id>P43365</id>
    </interactant>
    <interactant intactId="EBI-10234819">
        <id>Q14CZ7</id>
        <label>FASTKD3</label>
    </interactant>
    <organismsDiffer>false</organismsDiffer>
    <experiments>3</experiments>
</comment>
<comment type="interaction">
    <interactant intactId="EBI-749530">
        <id>P43365</id>
    </interactant>
    <interactant intactId="EBI-744935">
        <id>Q9BVV2</id>
        <label>FNDC11</label>
    </interactant>
    <organismsDiffer>false</organismsDiffer>
    <experiments>6</experiments>
</comment>
<comment type="interaction">
    <interactant intactId="EBI-749530">
        <id>P43365</id>
    </interactant>
    <interactant intactId="EBI-12057631">
        <id>A0A087WSW0</id>
        <label>HELT</label>
    </interactant>
    <organismsDiffer>false</organismsDiffer>
    <experiments>3</experiments>
</comment>
<comment type="interaction">
    <interactant intactId="EBI-749530">
        <id>P43365</id>
    </interactant>
    <interactant intactId="EBI-741469">
        <id>P52789</id>
        <label>HK2</label>
    </interactant>
    <organismsDiffer>false</organismsDiffer>
    <experiments>3</experiments>
</comment>
<comment type="interaction">
    <interactant intactId="EBI-749530">
        <id>P43365</id>
    </interactant>
    <interactant intactId="EBI-740244">
        <id>Q7Z3B3</id>
        <label>KANSL1</label>
    </interactant>
    <organismsDiffer>false</organismsDiffer>
    <experiments>3</experiments>
</comment>
<comment type="interaction">
    <interactant intactId="EBI-749530">
        <id>P43365</id>
    </interactant>
    <interactant intactId="EBI-9089060">
        <id>Q7Z7F0-4</id>
        <label>KHDC4</label>
    </interactant>
    <organismsDiffer>false</organismsDiffer>
    <experiments>3</experiments>
</comment>
<comment type="interaction">
    <interactant intactId="EBI-749530">
        <id>P43365</id>
    </interactant>
    <interactant intactId="EBI-2824497">
        <id>Q9H019</id>
        <label>MTFR1L</label>
    </interactant>
    <organismsDiffer>false</organismsDiffer>
    <experiments>6</experiments>
</comment>
<comment type="interaction">
    <interactant intactId="EBI-749530">
        <id>P43365</id>
    </interactant>
    <interactant intactId="EBI-10252703">
        <id>Q6P444</id>
        <label>MTFR2</label>
    </interactant>
    <organismsDiffer>false</organismsDiffer>
    <experiments>3</experiments>
</comment>
<comment type="interaction">
    <interactant intactId="EBI-749530">
        <id>P43365</id>
    </interactant>
    <interactant intactId="EBI-10216569">
        <id>P60321</id>
        <label>NANOS2</label>
    </interactant>
    <organismsDiffer>false</organismsDiffer>
    <experiments>7</experiments>
</comment>
<comment type="interaction">
    <interactant intactId="EBI-749530">
        <id>P43365</id>
    </interactant>
    <interactant intactId="EBI-953859">
        <id>P01160</id>
        <label>NPPA</label>
    </interactant>
    <organismsDiffer>false</organismsDiffer>
    <experiments>6</experiments>
</comment>
<comment type="interaction">
    <interactant intactId="EBI-749530">
        <id>P43365</id>
    </interactant>
    <interactant intactId="EBI-741158">
        <id>Q96HA8</id>
        <label>NTAQ1</label>
    </interactant>
    <organismsDiffer>false</organismsDiffer>
    <experiments>3</experiments>
</comment>
<comment type="interaction">
    <interactant intactId="EBI-749530">
        <id>P43365</id>
    </interactant>
    <interactant intactId="EBI-10320765">
        <id>Q9UGP5-2</id>
        <label>POLL</label>
    </interactant>
    <organismsDiffer>false</organismsDiffer>
    <experiments>6</experiments>
</comment>
<comment type="interaction">
    <interactant intactId="EBI-749530">
        <id>P43365</id>
    </interactant>
    <interactant intactId="EBI-12029004">
        <id>P78424</id>
        <label>POU6F2</label>
    </interactant>
    <organismsDiffer>false</organismsDiffer>
    <experiments>3</experiments>
</comment>
<comment type="interaction">
    <interactant intactId="EBI-749530">
        <id>P43365</id>
    </interactant>
    <interactant intactId="EBI-713793">
        <id>Q96GD3</id>
        <label>SCMH1</label>
    </interactant>
    <organismsDiffer>false</organismsDiffer>
    <experiments>3</experiments>
</comment>
<comment type="interaction">
    <interactant intactId="EBI-749530">
        <id>P43365</id>
    </interactant>
    <interactant intactId="EBI-1221022">
        <id>Q8N5T2</id>
        <label>TBC1D19</label>
    </interactant>
    <organismsDiffer>false</organismsDiffer>
    <experiments>3</experiments>
</comment>
<comment type="interaction">
    <interactant intactId="EBI-749530">
        <id>P43365</id>
    </interactant>
    <interactant intactId="EBI-2555179">
        <id>Q9NUJ3</id>
        <label>TCP11L1</label>
    </interactant>
    <organismsDiffer>false</organismsDiffer>
    <experiments>3</experiments>
</comment>
<comment type="interaction">
    <interactant intactId="EBI-749530">
        <id>P43365</id>
    </interactant>
    <interactant intactId="EBI-474142">
        <id>Q06732</id>
        <label>ZNF33B</label>
    </interactant>
    <organismsDiffer>false</organismsDiffer>
    <experiments>3</experiments>
</comment>
<comment type="tissue specificity">
    <text>Expressed in many tumors of several types, such as melanoma, head and neck squamous cell carcinoma, lung carcinoma and breast carcinoma, but not in normal tissues except for testes.</text>
</comment>
<gene>
    <name type="primary">MAGEA12</name>
    <name type="synonym">MAGE12</name>
</gene>
<sequence>MPLEQRSQHCKPEEGLEAQGEALGLVGAQAPATEEQETASSSSTLVEVTLREVPAAESPSPPHSPQGASTLPTTINYTLWSQSDEGSSNEEQEGPSTFPDLETSFQVALSRKMAELVHFLLLKYRAREPFTKAEMLGSVIRNFQDFFPVIFSKASEYLQLVFGIEVVEVVRIGHLYILVTCLGLSYDGLLGDNQIVPKTGLLIIVLAIIAKEGDCAPEEKIWEELSVLEASDGREDSVFAHPRKLLTQDLVQENYLEYRQVPGSDPACYEFLWGPRALVETSYVKVLHHLLKISGGPHISYPPLHEWAFREGEE</sequence>
<evidence type="ECO:0000255" key="1">
    <source>
        <dbReference type="PROSITE-ProRule" id="PRU00127"/>
    </source>
</evidence>
<evidence type="ECO:0000256" key="2">
    <source>
        <dbReference type="SAM" id="MobiDB-lite"/>
    </source>
</evidence>
<evidence type="ECO:0000269" key="3">
    <source>
    </source>
</evidence>
<evidence type="ECO:0000305" key="4"/>
<feature type="chain" id="PRO_0000156711" description="Melanoma-associated antigen 12">
    <location>
        <begin position="1"/>
        <end position="314"/>
    </location>
</feature>
<feature type="domain" description="MAGE" evidence="1">
    <location>
        <begin position="109"/>
        <end position="308"/>
    </location>
</feature>
<feature type="region of interest" description="Disordered" evidence="2">
    <location>
        <begin position="1"/>
        <end position="72"/>
    </location>
</feature>
<feature type="compositionally biased region" description="Basic and acidic residues" evidence="2">
    <location>
        <begin position="1"/>
        <end position="14"/>
    </location>
</feature>
<feature type="compositionally biased region" description="Low complexity" evidence="2">
    <location>
        <begin position="17"/>
        <end position="44"/>
    </location>
</feature>
<feature type="sequence variant" id="VAR_053498" description="In dbSNP:rs16996512.">
    <original>E</original>
    <variation>D</variation>
    <location>
        <position position="57"/>
    </location>
</feature>
<feature type="sequence conflict" description="In Ref. 2." evidence="4" ref="2">
    <original>C</original>
    <variation>S</variation>
    <location>
        <position position="10"/>
    </location>
</feature>
<feature type="sequence conflict" description="In Ref. 1; AAA19023." evidence="4" ref="1">
    <original>D</original>
    <variation>A</variation>
    <location>
        <position position="187"/>
    </location>
</feature>
<feature type="sequence conflict" description="In Ref. 1; AAA19023." evidence="4" ref="1">
    <original>S</original>
    <variation>P</variation>
    <location>
        <position position="300"/>
    </location>
</feature>
<dbReference type="EMBL" id="L18877">
    <property type="protein sequence ID" value="AAA19023.1"/>
    <property type="molecule type" value="Genomic_DNA"/>
</dbReference>
<dbReference type="EMBL" id="U82671">
    <property type="status" value="NOT_ANNOTATED_CDS"/>
    <property type="molecule type" value="Genomic_DNA"/>
</dbReference>
<dbReference type="EMBL" id="BT007108">
    <property type="protein sequence ID" value="AAP35772.1"/>
    <property type="molecule type" value="mRNA"/>
</dbReference>
<dbReference type="EMBL" id="CR541775">
    <property type="protein sequence ID" value="CAG46574.1"/>
    <property type="molecule type" value="mRNA"/>
</dbReference>
<dbReference type="EMBL" id="AK314168">
    <property type="protein sequence ID" value="BAG36852.1"/>
    <property type="molecule type" value="mRNA"/>
</dbReference>
<dbReference type="EMBL" id="CH471169">
    <property type="protein sequence ID" value="EAW99432.1"/>
    <property type="molecule type" value="Genomic_DNA"/>
</dbReference>
<dbReference type="EMBL" id="BC003408">
    <property type="protein sequence ID" value="AAH03408.1"/>
    <property type="molecule type" value="mRNA"/>
</dbReference>
<dbReference type="CCDS" id="CCDS76048.1"/>
<dbReference type="PIR" id="I54519">
    <property type="entry name" value="I54519"/>
</dbReference>
<dbReference type="RefSeq" id="NP_001159858.1">
    <property type="nucleotide sequence ID" value="NM_001166386.3"/>
</dbReference>
<dbReference type="RefSeq" id="NP_001159859.1">
    <property type="nucleotide sequence ID" value="NM_001166387.4"/>
</dbReference>
<dbReference type="RefSeq" id="NP_005358.2">
    <property type="nucleotide sequence ID" value="NM_005367.7"/>
</dbReference>
<dbReference type="SMR" id="P43365"/>
<dbReference type="BioGRID" id="110285">
    <property type="interactions" value="33"/>
</dbReference>
<dbReference type="FunCoup" id="P43365">
    <property type="interactions" value="4"/>
</dbReference>
<dbReference type="IntAct" id="P43365">
    <property type="interactions" value="24"/>
</dbReference>
<dbReference type="STRING" id="9606.ENSP00000377447"/>
<dbReference type="GlyGen" id="P43365">
    <property type="glycosylation" value="1 site, 1 O-linked glycan (1 site)"/>
</dbReference>
<dbReference type="iPTMnet" id="P43365"/>
<dbReference type="PhosphoSitePlus" id="P43365"/>
<dbReference type="BioMuta" id="MAGEA12"/>
<dbReference type="DMDM" id="14286145"/>
<dbReference type="jPOST" id="P43365"/>
<dbReference type="MassIVE" id="P43365"/>
<dbReference type="PaxDb" id="9606-ENSP00000377478"/>
<dbReference type="PeptideAtlas" id="P43365"/>
<dbReference type="ProteomicsDB" id="55628"/>
<dbReference type="Antibodypedia" id="30746">
    <property type="antibodies" value="137 antibodies from 22 providers"/>
</dbReference>
<dbReference type="DNASU" id="4111"/>
<dbReference type="Ensembl" id="ENST00000357916.8">
    <property type="protein sequence ID" value="ENSP00000350592.4"/>
    <property type="gene ID" value="ENSG00000213401.10"/>
</dbReference>
<dbReference type="Ensembl" id="ENST00000393869.8">
    <property type="protein sequence ID" value="ENSP00000377447.3"/>
    <property type="gene ID" value="ENSG00000213401.10"/>
</dbReference>
<dbReference type="Ensembl" id="ENST00000393900.4">
    <property type="protein sequence ID" value="ENSP00000377478.3"/>
    <property type="gene ID" value="ENSG00000213401.10"/>
</dbReference>
<dbReference type="Ensembl" id="ENST00000709992.1">
    <property type="protein sequence ID" value="ENSP00000517976.1"/>
    <property type="gene ID" value="ENSG00000292189.1"/>
</dbReference>
<dbReference type="Ensembl" id="ENST00000709993.1">
    <property type="protein sequence ID" value="ENSP00000517977.1"/>
    <property type="gene ID" value="ENSG00000292189.1"/>
</dbReference>
<dbReference type="Ensembl" id="ENST00000709994.1">
    <property type="protein sequence ID" value="ENSP00000517978.1"/>
    <property type="gene ID" value="ENSG00000292189.1"/>
</dbReference>
<dbReference type="GeneID" id="4111"/>
<dbReference type="KEGG" id="hsa:4111"/>
<dbReference type="MANE-Select" id="ENST00000393869.8">
    <property type="protein sequence ID" value="ENSP00000377447.3"/>
    <property type="RefSeq nucleotide sequence ID" value="NM_001166387.4"/>
    <property type="RefSeq protein sequence ID" value="NP_001159859.1"/>
</dbReference>
<dbReference type="UCSC" id="uc004fgc.3">
    <property type="organism name" value="human"/>
</dbReference>
<dbReference type="AGR" id="HGNC:6799"/>
<dbReference type="CTD" id="4111"/>
<dbReference type="DisGeNET" id="4111"/>
<dbReference type="GeneCards" id="MAGEA12"/>
<dbReference type="HGNC" id="HGNC:6799">
    <property type="gene designation" value="MAGEA12"/>
</dbReference>
<dbReference type="HPA" id="ENSG00000213401">
    <property type="expression patterns" value="Tissue enriched (testis)"/>
</dbReference>
<dbReference type="MIM" id="300177">
    <property type="type" value="gene"/>
</dbReference>
<dbReference type="neXtProt" id="NX_P43365"/>
<dbReference type="OpenTargets" id="ENSG00000213401"/>
<dbReference type="PharmGKB" id="PA30545"/>
<dbReference type="VEuPathDB" id="HostDB:ENSG00000213401"/>
<dbReference type="eggNOG" id="KOG4562">
    <property type="taxonomic scope" value="Eukaryota"/>
</dbReference>
<dbReference type="GeneTree" id="ENSGT00940000164673"/>
<dbReference type="HOGENOM" id="CLU_039582_1_1_1"/>
<dbReference type="InParanoid" id="P43365"/>
<dbReference type="OMA" id="HEWAWRE"/>
<dbReference type="PAN-GO" id="P43365">
    <property type="GO annotations" value="3 GO annotations based on evolutionary models"/>
</dbReference>
<dbReference type="PhylomeDB" id="P43365"/>
<dbReference type="TreeFam" id="TF328505"/>
<dbReference type="PathwayCommons" id="P43365"/>
<dbReference type="SignaLink" id="P43365"/>
<dbReference type="BioGRID-ORCS" id="4111">
    <property type="hits" value="24 hits in 732 CRISPR screens"/>
</dbReference>
<dbReference type="GeneWiki" id="MAGEA12"/>
<dbReference type="GenomeRNAi" id="4111"/>
<dbReference type="Pharos" id="P43365">
    <property type="development level" value="Tbio"/>
</dbReference>
<dbReference type="PRO" id="PR:P43365"/>
<dbReference type="Proteomes" id="UP000005640">
    <property type="component" value="Chromosome X"/>
</dbReference>
<dbReference type="RNAct" id="P43365">
    <property type="molecule type" value="protein"/>
</dbReference>
<dbReference type="Bgee" id="ENSG00000213401">
    <property type="expression patterns" value="Expressed in primordial germ cell in gonad and 44 other cell types or tissues"/>
</dbReference>
<dbReference type="GO" id="GO:0005634">
    <property type="term" value="C:nucleus"/>
    <property type="evidence" value="ECO:0000318"/>
    <property type="project" value="GO_Central"/>
</dbReference>
<dbReference type="GO" id="GO:0042826">
    <property type="term" value="F:histone deacetylase binding"/>
    <property type="evidence" value="ECO:0000318"/>
    <property type="project" value="GO_Central"/>
</dbReference>
<dbReference type="GO" id="GO:0000122">
    <property type="term" value="P:negative regulation of transcription by RNA polymerase II"/>
    <property type="evidence" value="ECO:0000318"/>
    <property type="project" value="GO_Central"/>
</dbReference>
<dbReference type="FunFam" id="1.10.10.1200:FF:000002">
    <property type="entry name" value="MAGE family member A11"/>
    <property type="match status" value="1"/>
</dbReference>
<dbReference type="FunFam" id="1.10.10.1210:FF:000001">
    <property type="entry name" value="melanoma-associated antigen D1"/>
    <property type="match status" value="1"/>
</dbReference>
<dbReference type="Gene3D" id="1.10.10.1200">
    <property type="entry name" value="MAGE homology domain, winged helix WH1 motif"/>
    <property type="match status" value="1"/>
</dbReference>
<dbReference type="Gene3D" id="1.10.10.1210">
    <property type="entry name" value="MAGE homology domain, winged helix WH2 motif"/>
    <property type="match status" value="1"/>
</dbReference>
<dbReference type="InterPro" id="IPR037445">
    <property type="entry name" value="MAGE"/>
</dbReference>
<dbReference type="InterPro" id="IPR021072">
    <property type="entry name" value="MAGE_N"/>
</dbReference>
<dbReference type="InterPro" id="IPR041898">
    <property type="entry name" value="MAGE_WH1"/>
</dbReference>
<dbReference type="InterPro" id="IPR041899">
    <property type="entry name" value="MAGE_WH2"/>
</dbReference>
<dbReference type="InterPro" id="IPR002190">
    <property type="entry name" value="MHD_dom"/>
</dbReference>
<dbReference type="PANTHER" id="PTHR11736:SF142">
    <property type="entry name" value="MELANOMA-ASSOCIATED ANTIGEN 12"/>
    <property type="match status" value="1"/>
</dbReference>
<dbReference type="PANTHER" id="PTHR11736">
    <property type="entry name" value="MELANOMA-ASSOCIATED ANTIGEN MAGE ANTIGEN"/>
    <property type="match status" value="1"/>
</dbReference>
<dbReference type="Pfam" id="PF01454">
    <property type="entry name" value="MAGE"/>
    <property type="match status" value="1"/>
</dbReference>
<dbReference type="Pfam" id="PF12440">
    <property type="entry name" value="MAGE_N"/>
    <property type="match status" value="1"/>
</dbReference>
<dbReference type="SMART" id="SM01373">
    <property type="entry name" value="MAGE"/>
    <property type="match status" value="1"/>
</dbReference>
<dbReference type="SMART" id="SM01392">
    <property type="entry name" value="MAGE_N"/>
    <property type="match status" value="1"/>
</dbReference>
<dbReference type="PROSITE" id="PS50838">
    <property type="entry name" value="MAGE"/>
    <property type="match status" value="1"/>
</dbReference>
<keyword id="KW-1267">Proteomics identification</keyword>
<keyword id="KW-1185">Reference proteome</keyword>
<keyword id="KW-0825">Tumor antigen</keyword>
<organism>
    <name type="scientific">Homo sapiens</name>
    <name type="common">Human</name>
    <dbReference type="NCBI Taxonomy" id="9606"/>
    <lineage>
        <taxon>Eukaryota</taxon>
        <taxon>Metazoa</taxon>
        <taxon>Chordata</taxon>
        <taxon>Craniata</taxon>
        <taxon>Vertebrata</taxon>
        <taxon>Euteleostomi</taxon>
        <taxon>Mammalia</taxon>
        <taxon>Eutheria</taxon>
        <taxon>Euarchontoglires</taxon>
        <taxon>Primates</taxon>
        <taxon>Haplorrhini</taxon>
        <taxon>Catarrhini</taxon>
        <taxon>Hominidae</taxon>
        <taxon>Homo</taxon>
    </lineage>
</organism>
<accession>P43365</accession>
<accession>Q6FHH8</accession>
<accession>Q9NSD3</accession>
<name>MAGAC_HUMAN</name>
<reference key="1">
    <citation type="journal article" date="1994" name="Immunogenetics">
        <title>Sequence and expression pattern of the human MAGE2 gene.</title>
        <authorList>
            <person name="De Smet C."/>
            <person name="Lurquin C."/>
            <person name="van der Bruggen P."/>
            <person name="De Plaen E."/>
            <person name="Brasseur F."/>
            <person name="Boon T."/>
        </authorList>
    </citation>
    <scope>NUCLEOTIDE SEQUENCE [GENOMIC DNA]</scope>
</reference>
<reference key="2">
    <citation type="journal article" date="1994" name="Biochem. Biophys. Res. Commun.">
        <title>Cloning and analysis of MAGE-1-related genes.</title>
        <authorList>
            <person name="Ding M."/>
            <person name="Beck R.J."/>
            <person name="Keller C.J."/>
            <person name="Fenton R.G."/>
        </authorList>
    </citation>
    <scope>NUCLEOTIDE SEQUENCE [MRNA]</scope>
    <source>
        <tissue>Skin</tissue>
    </source>
</reference>
<reference key="3">
    <citation type="journal article" date="2000" name="Genome Res.">
        <title>Comparative genome sequence analysis of the Bpa/Str region in mouse and man.</title>
        <authorList>
            <person name="Mallon A.-M."/>
            <person name="Platzer M."/>
            <person name="Bate R."/>
            <person name="Gloeckner G."/>
            <person name="Botcherby M.R.M."/>
            <person name="Nordsiek G."/>
            <person name="Strivens M.A."/>
            <person name="Kioschis P."/>
            <person name="Dangel A."/>
            <person name="Cunningham D."/>
            <person name="Straw R.N.A."/>
            <person name="Weston P."/>
            <person name="Gilbert M."/>
            <person name="Fernando S."/>
            <person name="Goodall K."/>
            <person name="Hunter G."/>
            <person name="Greystrong J.S."/>
            <person name="Clarke D."/>
            <person name="Kimberley C."/>
            <person name="Goerdes M."/>
            <person name="Blechschmidt K."/>
            <person name="Rump A."/>
            <person name="Hinzmann B."/>
            <person name="Mundy C.R."/>
            <person name="Miller W."/>
            <person name="Poustka A."/>
            <person name="Herman G.E."/>
            <person name="Rhodes M."/>
            <person name="Denny P."/>
            <person name="Rosenthal A."/>
            <person name="Brown S.D.M."/>
        </authorList>
    </citation>
    <scope>NUCLEOTIDE SEQUENCE [LARGE SCALE GENOMIC DNA]</scope>
</reference>
<reference key="4">
    <citation type="submission" date="2003-05" db="EMBL/GenBank/DDBJ databases">
        <title>Cloning of human full-length CDSs in BD Creator(TM) system donor vector.</title>
        <authorList>
            <person name="Kalnine N."/>
            <person name="Chen X."/>
            <person name="Rolfs A."/>
            <person name="Halleck A."/>
            <person name="Hines L."/>
            <person name="Eisenstein S."/>
            <person name="Koundinya M."/>
            <person name="Raphael J."/>
            <person name="Moreira D."/>
            <person name="Kelley T."/>
            <person name="LaBaer J."/>
            <person name="Lin Y."/>
            <person name="Phelan M."/>
            <person name="Farmer A."/>
        </authorList>
    </citation>
    <scope>NUCLEOTIDE SEQUENCE [LARGE SCALE MRNA]</scope>
</reference>
<reference key="5">
    <citation type="submission" date="2004-06" db="EMBL/GenBank/DDBJ databases">
        <title>Cloning of human full open reading frames in Gateway(TM) system entry vector (pDONR201).</title>
        <authorList>
            <person name="Ebert L."/>
            <person name="Schick M."/>
            <person name="Neubert P."/>
            <person name="Schatten R."/>
            <person name="Henze S."/>
            <person name="Korn B."/>
        </authorList>
    </citation>
    <scope>NUCLEOTIDE SEQUENCE [LARGE SCALE MRNA]</scope>
</reference>
<reference key="6">
    <citation type="journal article" date="2004" name="Nat. Genet.">
        <title>Complete sequencing and characterization of 21,243 full-length human cDNAs.</title>
        <authorList>
            <person name="Ota T."/>
            <person name="Suzuki Y."/>
            <person name="Nishikawa T."/>
            <person name="Otsuki T."/>
            <person name="Sugiyama T."/>
            <person name="Irie R."/>
            <person name="Wakamatsu A."/>
            <person name="Hayashi K."/>
            <person name="Sato H."/>
            <person name="Nagai K."/>
            <person name="Kimura K."/>
            <person name="Makita H."/>
            <person name="Sekine M."/>
            <person name="Obayashi M."/>
            <person name="Nishi T."/>
            <person name="Shibahara T."/>
            <person name="Tanaka T."/>
            <person name="Ishii S."/>
            <person name="Yamamoto J."/>
            <person name="Saito K."/>
            <person name="Kawai Y."/>
            <person name="Isono Y."/>
            <person name="Nakamura Y."/>
            <person name="Nagahari K."/>
            <person name="Murakami K."/>
            <person name="Yasuda T."/>
            <person name="Iwayanagi T."/>
            <person name="Wagatsuma M."/>
            <person name="Shiratori A."/>
            <person name="Sudo H."/>
            <person name="Hosoiri T."/>
            <person name="Kaku Y."/>
            <person name="Kodaira H."/>
            <person name="Kondo H."/>
            <person name="Sugawara M."/>
            <person name="Takahashi M."/>
            <person name="Kanda K."/>
            <person name="Yokoi T."/>
            <person name="Furuya T."/>
            <person name="Kikkawa E."/>
            <person name="Omura Y."/>
            <person name="Abe K."/>
            <person name="Kamihara K."/>
            <person name="Katsuta N."/>
            <person name="Sato K."/>
            <person name="Tanikawa M."/>
            <person name="Yamazaki M."/>
            <person name="Ninomiya K."/>
            <person name="Ishibashi T."/>
            <person name="Yamashita H."/>
            <person name="Murakawa K."/>
            <person name="Fujimori K."/>
            <person name="Tanai H."/>
            <person name="Kimata M."/>
            <person name="Watanabe M."/>
            <person name="Hiraoka S."/>
            <person name="Chiba Y."/>
            <person name="Ishida S."/>
            <person name="Ono Y."/>
            <person name="Takiguchi S."/>
            <person name="Watanabe S."/>
            <person name="Yosida M."/>
            <person name="Hotuta T."/>
            <person name="Kusano J."/>
            <person name="Kanehori K."/>
            <person name="Takahashi-Fujii A."/>
            <person name="Hara H."/>
            <person name="Tanase T.-O."/>
            <person name="Nomura Y."/>
            <person name="Togiya S."/>
            <person name="Komai F."/>
            <person name="Hara R."/>
            <person name="Takeuchi K."/>
            <person name="Arita M."/>
            <person name="Imose N."/>
            <person name="Musashino K."/>
            <person name="Yuuki H."/>
            <person name="Oshima A."/>
            <person name="Sasaki N."/>
            <person name="Aotsuka S."/>
            <person name="Yoshikawa Y."/>
            <person name="Matsunawa H."/>
            <person name="Ichihara T."/>
            <person name="Shiohata N."/>
            <person name="Sano S."/>
            <person name="Moriya S."/>
            <person name="Momiyama H."/>
            <person name="Satoh N."/>
            <person name="Takami S."/>
            <person name="Terashima Y."/>
            <person name="Suzuki O."/>
            <person name="Nakagawa S."/>
            <person name="Senoh A."/>
            <person name="Mizoguchi H."/>
            <person name="Goto Y."/>
            <person name="Shimizu F."/>
            <person name="Wakebe H."/>
            <person name="Hishigaki H."/>
            <person name="Watanabe T."/>
            <person name="Sugiyama A."/>
            <person name="Takemoto M."/>
            <person name="Kawakami B."/>
            <person name="Yamazaki M."/>
            <person name="Watanabe K."/>
            <person name="Kumagai A."/>
            <person name="Itakura S."/>
            <person name="Fukuzumi Y."/>
            <person name="Fujimori Y."/>
            <person name="Komiyama M."/>
            <person name="Tashiro H."/>
            <person name="Tanigami A."/>
            <person name="Fujiwara T."/>
            <person name="Ono T."/>
            <person name="Yamada K."/>
            <person name="Fujii Y."/>
            <person name="Ozaki K."/>
            <person name="Hirao M."/>
            <person name="Ohmori Y."/>
            <person name="Kawabata A."/>
            <person name="Hikiji T."/>
            <person name="Kobatake N."/>
            <person name="Inagaki H."/>
            <person name="Ikema Y."/>
            <person name="Okamoto S."/>
            <person name="Okitani R."/>
            <person name="Kawakami T."/>
            <person name="Noguchi S."/>
            <person name="Itoh T."/>
            <person name="Shigeta K."/>
            <person name="Senba T."/>
            <person name="Matsumura K."/>
            <person name="Nakajima Y."/>
            <person name="Mizuno T."/>
            <person name="Morinaga M."/>
            <person name="Sasaki M."/>
            <person name="Togashi T."/>
            <person name="Oyama M."/>
            <person name="Hata H."/>
            <person name="Watanabe M."/>
            <person name="Komatsu T."/>
            <person name="Mizushima-Sugano J."/>
            <person name="Satoh T."/>
            <person name="Shirai Y."/>
            <person name="Takahashi Y."/>
            <person name="Nakagawa K."/>
            <person name="Okumura K."/>
            <person name="Nagase T."/>
            <person name="Nomura N."/>
            <person name="Kikuchi H."/>
            <person name="Masuho Y."/>
            <person name="Yamashita R."/>
            <person name="Nakai K."/>
            <person name="Yada T."/>
            <person name="Nakamura Y."/>
            <person name="Ohara O."/>
            <person name="Isogai T."/>
            <person name="Sugano S."/>
        </authorList>
    </citation>
    <scope>NUCLEOTIDE SEQUENCE [LARGE SCALE MRNA]</scope>
    <source>
        <tissue>Esophagus</tissue>
    </source>
</reference>
<reference key="7">
    <citation type="journal article" date="2005" name="Nature">
        <title>The DNA sequence of the human X chromosome.</title>
        <authorList>
            <person name="Ross M.T."/>
            <person name="Grafham D.V."/>
            <person name="Coffey A.J."/>
            <person name="Scherer S."/>
            <person name="McLay K."/>
            <person name="Muzny D."/>
            <person name="Platzer M."/>
            <person name="Howell G.R."/>
            <person name="Burrows C."/>
            <person name="Bird C.P."/>
            <person name="Frankish A."/>
            <person name="Lovell F.L."/>
            <person name="Howe K.L."/>
            <person name="Ashurst J.L."/>
            <person name="Fulton R.S."/>
            <person name="Sudbrak R."/>
            <person name="Wen G."/>
            <person name="Jones M.C."/>
            <person name="Hurles M.E."/>
            <person name="Andrews T.D."/>
            <person name="Scott C.E."/>
            <person name="Searle S."/>
            <person name="Ramser J."/>
            <person name="Whittaker A."/>
            <person name="Deadman R."/>
            <person name="Carter N.P."/>
            <person name="Hunt S.E."/>
            <person name="Chen R."/>
            <person name="Cree A."/>
            <person name="Gunaratne P."/>
            <person name="Havlak P."/>
            <person name="Hodgson A."/>
            <person name="Metzker M.L."/>
            <person name="Richards S."/>
            <person name="Scott G."/>
            <person name="Steffen D."/>
            <person name="Sodergren E."/>
            <person name="Wheeler D.A."/>
            <person name="Worley K.C."/>
            <person name="Ainscough R."/>
            <person name="Ambrose K.D."/>
            <person name="Ansari-Lari M.A."/>
            <person name="Aradhya S."/>
            <person name="Ashwell R.I."/>
            <person name="Babbage A.K."/>
            <person name="Bagguley C.L."/>
            <person name="Ballabio A."/>
            <person name="Banerjee R."/>
            <person name="Barker G.E."/>
            <person name="Barlow K.F."/>
            <person name="Barrett I.P."/>
            <person name="Bates K.N."/>
            <person name="Beare D.M."/>
            <person name="Beasley H."/>
            <person name="Beasley O."/>
            <person name="Beck A."/>
            <person name="Bethel G."/>
            <person name="Blechschmidt K."/>
            <person name="Brady N."/>
            <person name="Bray-Allen S."/>
            <person name="Bridgeman A.M."/>
            <person name="Brown A.J."/>
            <person name="Brown M.J."/>
            <person name="Bonnin D."/>
            <person name="Bruford E.A."/>
            <person name="Buhay C."/>
            <person name="Burch P."/>
            <person name="Burford D."/>
            <person name="Burgess J."/>
            <person name="Burrill W."/>
            <person name="Burton J."/>
            <person name="Bye J.M."/>
            <person name="Carder C."/>
            <person name="Carrel L."/>
            <person name="Chako J."/>
            <person name="Chapman J.C."/>
            <person name="Chavez D."/>
            <person name="Chen E."/>
            <person name="Chen G."/>
            <person name="Chen Y."/>
            <person name="Chen Z."/>
            <person name="Chinault C."/>
            <person name="Ciccodicola A."/>
            <person name="Clark S.Y."/>
            <person name="Clarke G."/>
            <person name="Clee C.M."/>
            <person name="Clegg S."/>
            <person name="Clerc-Blankenburg K."/>
            <person name="Clifford K."/>
            <person name="Cobley V."/>
            <person name="Cole C.G."/>
            <person name="Conquer J.S."/>
            <person name="Corby N."/>
            <person name="Connor R.E."/>
            <person name="David R."/>
            <person name="Davies J."/>
            <person name="Davis C."/>
            <person name="Davis J."/>
            <person name="Delgado O."/>
            <person name="Deshazo D."/>
            <person name="Dhami P."/>
            <person name="Ding Y."/>
            <person name="Dinh H."/>
            <person name="Dodsworth S."/>
            <person name="Draper H."/>
            <person name="Dugan-Rocha S."/>
            <person name="Dunham A."/>
            <person name="Dunn M."/>
            <person name="Durbin K.J."/>
            <person name="Dutta I."/>
            <person name="Eades T."/>
            <person name="Ellwood M."/>
            <person name="Emery-Cohen A."/>
            <person name="Errington H."/>
            <person name="Evans K.L."/>
            <person name="Faulkner L."/>
            <person name="Francis F."/>
            <person name="Frankland J."/>
            <person name="Fraser A.E."/>
            <person name="Galgoczy P."/>
            <person name="Gilbert J."/>
            <person name="Gill R."/>
            <person name="Gloeckner G."/>
            <person name="Gregory S.G."/>
            <person name="Gribble S."/>
            <person name="Griffiths C."/>
            <person name="Grocock R."/>
            <person name="Gu Y."/>
            <person name="Gwilliam R."/>
            <person name="Hamilton C."/>
            <person name="Hart E.A."/>
            <person name="Hawes A."/>
            <person name="Heath P.D."/>
            <person name="Heitmann K."/>
            <person name="Hennig S."/>
            <person name="Hernandez J."/>
            <person name="Hinzmann B."/>
            <person name="Ho S."/>
            <person name="Hoffs M."/>
            <person name="Howden P.J."/>
            <person name="Huckle E.J."/>
            <person name="Hume J."/>
            <person name="Hunt P.J."/>
            <person name="Hunt A.R."/>
            <person name="Isherwood J."/>
            <person name="Jacob L."/>
            <person name="Johnson D."/>
            <person name="Jones S."/>
            <person name="de Jong P.J."/>
            <person name="Joseph S.S."/>
            <person name="Keenan S."/>
            <person name="Kelly S."/>
            <person name="Kershaw J.K."/>
            <person name="Khan Z."/>
            <person name="Kioschis P."/>
            <person name="Klages S."/>
            <person name="Knights A.J."/>
            <person name="Kosiura A."/>
            <person name="Kovar-Smith C."/>
            <person name="Laird G.K."/>
            <person name="Langford C."/>
            <person name="Lawlor S."/>
            <person name="Leversha M."/>
            <person name="Lewis L."/>
            <person name="Liu W."/>
            <person name="Lloyd C."/>
            <person name="Lloyd D.M."/>
            <person name="Loulseged H."/>
            <person name="Loveland J.E."/>
            <person name="Lovell J.D."/>
            <person name="Lozado R."/>
            <person name="Lu J."/>
            <person name="Lyne R."/>
            <person name="Ma J."/>
            <person name="Maheshwari M."/>
            <person name="Matthews L.H."/>
            <person name="McDowall J."/>
            <person name="McLaren S."/>
            <person name="McMurray A."/>
            <person name="Meidl P."/>
            <person name="Meitinger T."/>
            <person name="Milne S."/>
            <person name="Miner G."/>
            <person name="Mistry S.L."/>
            <person name="Morgan M."/>
            <person name="Morris S."/>
            <person name="Mueller I."/>
            <person name="Mullikin J.C."/>
            <person name="Nguyen N."/>
            <person name="Nordsiek G."/>
            <person name="Nyakatura G."/>
            <person name="O'dell C.N."/>
            <person name="Okwuonu G."/>
            <person name="Palmer S."/>
            <person name="Pandian R."/>
            <person name="Parker D."/>
            <person name="Parrish J."/>
            <person name="Pasternak S."/>
            <person name="Patel D."/>
            <person name="Pearce A.V."/>
            <person name="Pearson D.M."/>
            <person name="Pelan S.E."/>
            <person name="Perez L."/>
            <person name="Porter K.M."/>
            <person name="Ramsey Y."/>
            <person name="Reichwald K."/>
            <person name="Rhodes S."/>
            <person name="Ridler K.A."/>
            <person name="Schlessinger D."/>
            <person name="Schueler M.G."/>
            <person name="Sehra H.K."/>
            <person name="Shaw-Smith C."/>
            <person name="Shen H."/>
            <person name="Sheridan E.M."/>
            <person name="Shownkeen R."/>
            <person name="Skuce C.D."/>
            <person name="Smith M.L."/>
            <person name="Sotheran E.C."/>
            <person name="Steingruber H.E."/>
            <person name="Steward C.A."/>
            <person name="Storey R."/>
            <person name="Swann R.M."/>
            <person name="Swarbreck D."/>
            <person name="Tabor P.E."/>
            <person name="Taudien S."/>
            <person name="Taylor T."/>
            <person name="Teague B."/>
            <person name="Thomas K."/>
            <person name="Thorpe A."/>
            <person name="Timms K."/>
            <person name="Tracey A."/>
            <person name="Trevanion S."/>
            <person name="Tromans A.C."/>
            <person name="d'Urso M."/>
            <person name="Verduzco D."/>
            <person name="Villasana D."/>
            <person name="Waldron L."/>
            <person name="Wall M."/>
            <person name="Wang Q."/>
            <person name="Warren J."/>
            <person name="Warry G.L."/>
            <person name="Wei X."/>
            <person name="West A."/>
            <person name="Whitehead S.L."/>
            <person name="Whiteley M.N."/>
            <person name="Wilkinson J.E."/>
            <person name="Willey D.L."/>
            <person name="Williams G."/>
            <person name="Williams L."/>
            <person name="Williamson A."/>
            <person name="Williamson H."/>
            <person name="Wilming L."/>
            <person name="Woodmansey R.L."/>
            <person name="Wray P.W."/>
            <person name="Yen J."/>
            <person name="Zhang J."/>
            <person name="Zhou J."/>
            <person name="Zoghbi H."/>
            <person name="Zorilla S."/>
            <person name="Buck D."/>
            <person name="Reinhardt R."/>
            <person name="Poustka A."/>
            <person name="Rosenthal A."/>
            <person name="Lehrach H."/>
            <person name="Meindl A."/>
            <person name="Minx P.J."/>
            <person name="Hillier L.W."/>
            <person name="Willard H.F."/>
            <person name="Wilson R.K."/>
            <person name="Waterston R.H."/>
            <person name="Rice C.M."/>
            <person name="Vaudin M."/>
            <person name="Coulson A."/>
            <person name="Nelson D.L."/>
            <person name="Weinstock G."/>
            <person name="Sulston J.E."/>
            <person name="Durbin R.M."/>
            <person name="Hubbard T."/>
            <person name="Gibbs R.A."/>
            <person name="Beck S."/>
            <person name="Rogers J."/>
            <person name="Bentley D.R."/>
        </authorList>
    </citation>
    <scope>NUCLEOTIDE SEQUENCE [LARGE SCALE GENOMIC DNA]</scope>
</reference>
<reference key="8">
    <citation type="submission" date="2005-07" db="EMBL/GenBank/DDBJ databases">
        <authorList>
            <person name="Mural R.J."/>
            <person name="Istrail S."/>
            <person name="Sutton G.G."/>
            <person name="Florea L."/>
            <person name="Halpern A.L."/>
            <person name="Mobarry C.M."/>
            <person name="Lippert R."/>
            <person name="Walenz B."/>
            <person name="Shatkay H."/>
            <person name="Dew I."/>
            <person name="Miller J.R."/>
            <person name="Flanigan M.J."/>
            <person name="Edwards N.J."/>
            <person name="Bolanos R."/>
            <person name="Fasulo D."/>
            <person name="Halldorsson B.V."/>
            <person name="Hannenhalli S."/>
            <person name="Turner R."/>
            <person name="Yooseph S."/>
            <person name="Lu F."/>
            <person name="Nusskern D.R."/>
            <person name="Shue B.C."/>
            <person name="Zheng X.H."/>
            <person name="Zhong F."/>
            <person name="Delcher A.L."/>
            <person name="Huson D.H."/>
            <person name="Kravitz S.A."/>
            <person name="Mouchard L."/>
            <person name="Reinert K."/>
            <person name="Remington K.A."/>
            <person name="Clark A.G."/>
            <person name="Waterman M.S."/>
            <person name="Eichler E.E."/>
            <person name="Adams M.D."/>
            <person name="Hunkapiller M.W."/>
            <person name="Myers E.W."/>
            <person name="Venter J.C."/>
        </authorList>
    </citation>
    <scope>NUCLEOTIDE SEQUENCE [LARGE SCALE GENOMIC DNA]</scope>
</reference>
<reference key="9">
    <citation type="journal article" date="2004" name="Genome Res.">
        <title>The status, quality, and expansion of the NIH full-length cDNA project: the Mammalian Gene Collection (MGC).</title>
        <authorList>
            <consortium name="The MGC Project Team"/>
        </authorList>
    </citation>
    <scope>NUCLEOTIDE SEQUENCE [LARGE SCALE MRNA]</scope>
    <source>
        <tissue>Placenta</tissue>
    </source>
</reference>
<reference key="10">
    <citation type="journal article" date="2007" name="Cancer Res.">
        <title>MAGE-A, mMage-b, and MAGE-C proteins form complexes with KAP1 and suppress p53-dependent apoptosis in MAGE-positive cell lines.</title>
        <authorList>
            <person name="Yang B."/>
            <person name="O'Herrin S.M."/>
            <person name="Wu J."/>
            <person name="Reagan-Shaw S."/>
            <person name="Ma Y."/>
            <person name="Bhat K.M."/>
            <person name="Gravekamp C."/>
            <person name="Setaluri V."/>
            <person name="Peters N."/>
            <person name="Hoffmann F.M."/>
            <person name="Peng H."/>
            <person name="Ivanov A.V."/>
            <person name="Simpson A.J."/>
            <person name="Longley B.J."/>
        </authorList>
    </citation>
    <scope>FUNCTION</scope>
</reference>